<accession>Q0AUK9</accession>
<evidence type="ECO:0000255" key="1">
    <source>
        <dbReference type="HAMAP-Rule" id="MF_00059"/>
    </source>
</evidence>
<organism>
    <name type="scientific">Syntrophomonas wolfei subsp. wolfei (strain DSM 2245B / Goettingen)</name>
    <dbReference type="NCBI Taxonomy" id="335541"/>
    <lineage>
        <taxon>Bacteria</taxon>
        <taxon>Bacillati</taxon>
        <taxon>Bacillota</taxon>
        <taxon>Clostridia</taxon>
        <taxon>Eubacteriales</taxon>
        <taxon>Syntrophomonadaceae</taxon>
        <taxon>Syntrophomonas</taxon>
    </lineage>
</organism>
<name>RPOA_SYNWW</name>
<protein>
    <recommendedName>
        <fullName evidence="1">DNA-directed RNA polymerase subunit alpha</fullName>
        <shortName evidence="1">RNAP subunit alpha</shortName>
        <ecNumber evidence="1">2.7.7.6</ecNumber>
    </recommendedName>
    <alternativeName>
        <fullName evidence="1">RNA polymerase subunit alpha</fullName>
    </alternativeName>
    <alternativeName>
        <fullName evidence="1">Transcriptase subunit alpha</fullName>
    </alternativeName>
</protein>
<keyword id="KW-0240">DNA-directed RNA polymerase</keyword>
<keyword id="KW-0548">Nucleotidyltransferase</keyword>
<keyword id="KW-1185">Reference proteome</keyword>
<keyword id="KW-0804">Transcription</keyword>
<keyword id="KW-0808">Transferase</keyword>
<gene>
    <name evidence="1" type="primary">rpoA</name>
    <name type="ordered locus">Swol_2304</name>
</gene>
<sequence length="316" mass="35581">MLEMEKPRIDCVEKNSSSNYGRFVIEPLERGYGTTLGNSLRRVLLSSLPGAAVTSIKIDGVLHEFSTIPGVLEDTTEIILNIKKLVLSYTGSERKIIRLEQQGPKEVKASDITPDAEVEILNPDLHLASLDEDGKVEIEMTVERGRGYVSSDQQPQKNDDIVGLIPIDSIFTPVSRVNYTVENARVGKRTDYDRLNLEVWTNGSISPEEAISLSAQILIEYLKLFTEIDDTYAEVEILVEKEEEKKDKILEMSIEELELSVRASNGLKRASINTVGDLIAKNREEMSKIRNLGQKSLEEIERKLKELNLSFRKSED</sequence>
<dbReference type="EC" id="2.7.7.6" evidence="1"/>
<dbReference type="EMBL" id="CP000448">
    <property type="protein sequence ID" value="ABI69595.1"/>
    <property type="molecule type" value="Genomic_DNA"/>
</dbReference>
<dbReference type="RefSeq" id="WP_011641679.1">
    <property type="nucleotide sequence ID" value="NC_008346.1"/>
</dbReference>
<dbReference type="SMR" id="Q0AUK9"/>
<dbReference type="STRING" id="335541.Swol_2304"/>
<dbReference type="KEGG" id="swo:Swol_2304"/>
<dbReference type="eggNOG" id="COG0202">
    <property type="taxonomic scope" value="Bacteria"/>
</dbReference>
<dbReference type="HOGENOM" id="CLU_053084_0_1_9"/>
<dbReference type="OrthoDB" id="9805706at2"/>
<dbReference type="Proteomes" id="UP000001968">
    <property type="component" value="Chromosome"/>
</dbReference>
<dbReference type="GO" id="GO:0005737">
    <property type="term" value="C:cytoplasm"/>
    <property type="evidence" value="ECO:0007669"/>
    <property type="project" value="UniProtKB-ARBA"/>
</dbReference>
<dbReference type="GO" id="GO:0000428">
    <property type="term" value="C:DNA-directed RNA polymerase complex"/>
    <property type="evidence" value="ECO:0007669"/>
    <property type="project" value="UniProtKB-KW"/>
</dbReference>
<dbReference type="GO" id="GO:0003677">
    <property type="term" value="F:DNA binding"/>
    <property type="evidence" value="ECO:0007669"/>
    <property type="project" value="UniProtKB-UniRule"/>
</dbReference>
<dbReference type="GO" id="GO:0003899">
    <property type="term" value="F:DNA-directed RNA polymerase activity"/>
    <property type="evidence" value="ECO:0007669"/>
    <property type="project" value="UniProtKB-UniRule"/>
</dbReference>
<dbReference type="GO" id="GO:0046983">
    <property type="term" value="F:protein dimerization activity"/>
    <property type="evidence" value="ECO:0007669"/>
    <property type="project" value="InterPro"/>
</dbReference>
<dbReference type="GO" id="GO:0006351">
    <property type="term" value="P:DNA-templated transcription"/>
    <property type="evidence" value="ECO:0007669"/>
    <property type="project" value="UniProtKB-UniRule"/>
</dbReference>
<dbReference type="CDD" id="cd06928">
    <property type="entry name" value="RNAP_alpha_NTD"/>
    <property type="match status" value="1"/>
</dbReference>
<dbReference type="FunFam" id="2.170.120.12:FF:000001">
    <property type="entry name" value="DNA-directed RNA polymerase subunit alpha"/>
    <property type="match status" value="1"/>
</dbReference>
<dbReference type="Gene3D" id="1.10.150.20">
    <property type="entry name" value="5' to 3' exonuclease, C-terminal subdomain"/>
    <property type="match status" value="1"/>
</dbReference>
<dbReference type="Gene3D" id="2.170.120.12">
    <property type="entry name" value="DNA-directed RNA polymerase, insert domain"/>
    <property type="match status" value="1"/>
</dbReference>
<dbReference type="Gene3D" id="3.30.1360.10">
    <property type="entry name" value="RNA polymerase, RBP11-like subunit"/>
    <property type="match status" value="1"/>
</dbReference>
<dbReference type="HAMAP" id="MF_00059">
    <property type="entry name" value="RNApol_bact_RpoA"/>
    <property type="match status" value="1"/>
</dbReference>
<dbReference type="InterPro" id="IPR011262">
    <property type="entry name" value="DNA-dir_RNA_pol_insert"/>
</dbReference>
<dbReference type="InterPro" id="IPR011263">
    <property type="entry name" value="DNA-dir_RNA_pol_RpoA/D/Rpb3"/>
</dbReference>
<dbReference type="InterPro" id="IPR011773">
    <property type="entry name" value="DNA-dir_RpoA"/>
</dbReference>
<dbReference type="InterPro" id="IPR036603">
    <property type="entry name" value="RBP11-like"/>
</dbReference>
<dbReference type="InterPro" id="IPR011260">
    <property type="entry name" value="RNAP_asu_C"/>
</dbReference>
<dbReference type="InterPro" id="IPR036643">
    <property type="entry name" value="RNApol_insert_sf"/>
</dbReference>
<dbReference type="NCBIfam" id="NF003513">
    <property type="entry name" value="PRK05182.1-2"/>
    <property type="match status" value="1"/>
</dbReference>
<dbReference type="NCBIfam" id="NF003515">
    <property type="entry name" value="PRK05182.2-1"/>
    <property type="match status" value="1"/>
</dbReference>
<dbReference type="NCBIfam" id="NF003516">
    <property type="entry name" value="PRK05182.2-2"/>
    <property type="match status" value="1"/>
</dbReference>
<dbReference type="NCBIfam" id="NF003519">
    <property type="entry name" value="PRK05182.2-5"/>
    <property type="match status" value="1"/>
</dbReference>
<dbReference type="NCBIfam" id="TIGR02027">
    <property type="entry name" value="rpoA"/>
    <property type="match status" value="1"/>
</dbReference>
<dbReference type="Pfam" id="PF01000">
    <property type="entry name" value="RNA_pol_A_bac"/>
    <property type="match status" value="1"/>
</dbReference>
<dbReference type="Pfam" id="PF03118">
    <property type="entry name" value="RNA_pol_A_CTD"/>
    <property type="match status" value="1"/>
</dbReference>
<dbReference type="Pfam" id="PF01193">
    <property type="entry name" value="RNA_pol_L"/>
    <property type="match status" value="1"/>
</dbReference>
<dbReference type="SMART" id="SM00662">
    <property type="entry name" value="RPOLD"/>
    <property type="match status" value="1"/>
</dbReference>
<dbReference type="SUPFAM" id="SSF47789">
    <property type="entry name" value="C-terminal domain of RNA polymerase alpha subunit"/>
    <property type="match status" value="1"/>
</dbReference>
<dbReference type="SUPFAM" id="SSF56553">
    <property type="entry name" value="Insert subdomain of RNA polymerase alpha subunit"/>
    <property type="match status" value="1"/>
</dbReference>
<dbReference type="SUPFAM" id="SSF55257">
    <property type="entry name" value="RBP11-like subunits of RNA polymerase"/>
    <property type="match status" value="1"/>
</dbReference>
<reference key="1">
    <citation type="journal article" date="2010" name="Environ. Microbiol.">
        <title>The genome of Syntrophomonas wolfei: new insights into syntrophic metabolism and biohydrogen production.</title>
        <authorList>
            <person name="Sieber J.R."/>
            <person name="Sims D.R."/>
            <person name="Han C."/>
            <person name="Kim E."/>
            <person name="Lykidis A."/>
            <person name="Lapidus A.L."/>
            <person name="McDonnald E."/>
            <person name="Rohlin L."/>
            <person name="Culley D.E."/>
            <person name="Gunsalus R."/>
            <person name="McInerney M.J."/>
        </authorList>
    </citation>
    <scope>NUCLEOTIDE SEQUENCE [LARGE SCALE GENOMIC DNA]</scope>
    <source>
        <strain>DSM 2245B / Goettingen</strain>
    </source>
</reference>
<proteinExistence type="inferred from homology"/>
<comment type="function">
    <text evidence="1">DNA-dependent RNA polymerase catalyzes the transcription of DNA into RNA using the four ribonucleoside triphosphates as substrates.</text>
</comment>
<comment type="catalytic activity">
    <reaction evidence="1">
        <text>RNA(n) + a ribonucleoside 5'-triphosphate = RNA(n+1) + diphosphate</text>
        <dbReference type="Rhea" id="RHEA:21248"/>
        <dbReference type="Rhea" id="RHEA-COMP:14527"/>
        <dbReference type="Rhea" id="RHEA-COMP:17342"/>
        <dbReference type="ChEBI" id="CHEBI:33019"/>
        <dbReference type="ChEBI" id="CHEBI:61557"/>
        <dbReference type="ChEBI" id="CHEBI:140395"/>
        <dbReference type="EC" id="2.7.7.6"/>
    </reaction>
</comment>
<comment type="subunit">
    <text evidence="1">Homodimer. The RNAP catalytic core consists of 2 alpha, 1 beta, 1 beta' and 1 omega subunit. When a sigma factor is associated with the core the holoenzyme is formed, which can initiate transcription.</text>
</comment>
<comment type="domain">
    <text evidence="1">The N-terminal domain is essential for RNAP assembly and basal transcription, whereas the C-terminal domain is involved in interaction with transcriptional regulators and with upstream promoter elements.</text>
</comment>
<comment type="similarity">
    <text evidence="1">Belongs to the RNA polymerase alpha chain family.</text>
</comment>
<feature type="chain" id="PRO_0000264563" description="DNA-directed RNA polymerase subunit alpha">
    <location>
        <begin position="1"/>
        <end position="316"/>
    </location>
</feature>
<feature type="region of interest" description="Alpha N-terminal domain (alpha-NTD)" evidence="1">
    <location>
        <begin position="1"/>
        <end position="229"/>
    </location>
</feature>
<feature type="region of interest" description="Alpha C-terminal domain (alpha-CTD)" evidence="1">
    <location>
        <begin position="246"/>
        <end position="316"/>
    </location>
</feature>